<dbReference type="EMBL" id="CP000546">
    <property type="protein sequence ID" value="ABN03604.1"/>
    <property type="molecule type" value="Genomic_DNA"/>
</dbReference>
<dbReference type="RefSeq" id="WP_004198366.1">
    <property type="nucleotide sequence ID" value="NC_008836.1"/>
</dbReference>
<dbReference type="SMR" id="A2S7G5"/>
<dbReference type="GeneID" id="93061842"/>
<dbReference type="KEGG" id="bml:BMA10229_A1913"/>
<dbReference type="HOGENOM" id="CLU_086499_3_2_4"/>
<dbReference type="Proteomes" id="UP000002283">
    <property type="component" value="Chromosome I"/>
</dbReference>
<dbReference type="GO" id="GO:0022625">
    <property type="term" value="C:cytosolic large ribosomal subunit"/>
    <property type="evidence" value="ECO:0007669"/>
    <property type="project" value="TreeGrafter"/>
</dbReference>
<dbReference type="GO" id="GO:0003729">
    <property type="term" value="F:mRNA binding"/>
    <property type="evidence" value="ECO:0007669"/>
    <property type="project" value="TreeGrafter"/>
</dbReference>
<dbReference type="GO" id="GO:0003735">
    <property type="term" value="F:structural constituent of ribosome"/>
    <property type="evidence" value="ECO:0007669"/>
    <property type="project" value="InterPro"/>
</dbReference>
<dbReference type="GO" id="GO:0006412">
    <property type="term" value="P:translation"/>
    <property type="evidence" value="ECO:0007669"/>
    <property type="project" value="UniProtKB-UniRule"/>
</dbReference>
<dbReference type="CDD" id="cd00387">
    <property type="entry name" value="Ribosomal_L7_L12"/>
    <property type="match status" value="1"/>
</dbReference>
<dbReference type="FunFam" id="3.30.1390.10:FF:000001">
    <property type="entry name" value="50S ribosomal protein L7/L12"/>
    <property type="match status" value="1"/>
</dbReference>
<dbReference type="Gene3D" id="3.30.1390.10">
    <property type="match status" value="1"/>
</dbReference>
<dbReference type="Gene3D" id="1.20.5.710">
    <property type="entry name" value="Single helix bin"/>
    <property type="match status" value="1"/>
</dbReference>
<dbReference type="HAMAP" id="MF_00368">
    <property type="entry name" value="Ribosomal_bL12"/>
    <property type="match status" value="1"/>
</dbReference>
<dbReference type="InterPro" id="IPR000206">
    <property type="entry name" value="Ribosomal_bL12"/>
</dbReference>
<dbReference type="InterPro" id="IPR013823">
    <property type="entry name" value="Ribosomal_bL12_C"/>
</dbReference>
<dbReference type="InterPro" id="IPR014719">
    <property type="entry name" value="Ribosomal_bL12_C/ClpS-like"/>
</dbReference>
<dbReference type="InterPro" id="IPR008932">
    <property type="entry name" value="Ribosomal_bL12_oligo"/>
</dbReference>
<dbReference type="InterPro" id="IPR036235">
    <property type="entry name" value="Ribosomal_bL12_oligo_N_sf"/>
</dbReference>
<dbReference type="NCBIfam" id="TIGR00855">
    <property type="entry name" value="L12"/>
    <property type="match status" value="1"/>
</dbReference>
<dbReference type="PANTHER" id="PTHR45987">
    <property type="entry name" value="39S RIBOSOMAL PROTEIN L12"/>
    <property type="match status" value="1"/>
</dbReference>
<dbReference type="PANTHER" id="PTHR45987:SF4">
    <property type="entry name" value="LARGE RIBOSOMAL SUBUNIT PROTEIN BL12M"/>
    <property type="match status" value="1"/>
</dbReference>
<dbReference type="Pfam" id="PF00542">
    <property type="entry name" value="Ribosomal_L12"/>
    <property type="match status" value="1"/>
</dbReference>
<dbReference type="Pfam" id="PF16320">
    <property type="entry name" value="Ribosomal_L12_N"/>
    <property type="match status" value="1"/>
</dbReference>
<dbReference type="SUPFAM" id="SSF54736">
    <property type="entry name" value="ClpS-like"/>
    <property type="match status" value="1"/>
</dbReference>
<dbReference type="SUPFAM" id="SSF48300">
    <property type="entry name" value="Ribosomal protein L7/12, oligomerisation (N-terminal) domain"/>
    <property type="match status" value="1"/>
</dbReference>
<organism>
    <name type="scientific">Burkholderia mallei (strain NCTC 10229)</name>
    <dbReference type="NCBI Taxonomy" id="412022"/>
    <lineage>
        <taxon>Bacteria</taxon>
        <taxon>Pseudomonadati</taxon>
        <taxon>Pseudomonadota</taxon>
        <taxon>Betaproteobacteria</taxon>
        <taxon>Burkholderiales</taxon>
        <taxon>Burkholderiaceae</taxon>
        <taxon>Burkholderia</taxon>
        <taxon>pseudomallei group</taxon>
    </lineage>
</organism>
<reference key="1">
    <citation type="journal article" date="2010" name="Genome Biol. Evol.">
        <title>Continuing evolution of Burkholderia mallei through genome reduction and large-scale rearrangements.</title>
        <authorList>
            <person name="Losada L."/>
            <person name="Ronning C.M."/>
            <person name="DeShazer D."/>
            <person name="Woods D."/>
            <person name="Fedorova N."/>
            <person name="Kim H.S."/>
            <person name="Shabalina S.A."/>
            <person name="Pearson T.R."/>
            <person name="Brinkac L."/>
            <person name="Tan P."/>
            <person name="Nandi T."/>
            <person name="Crabtree J."/>
            <person name="Badger J."/>
            <person name="Beckstrom-Sternberg S."/>
            <person name="Saqib M."/>
            <person name="Schutzer S.E."/>
            <person name="Keim P."/>
            <person name="Nierman W.C."/>
        </authorList>
    </citation>
    <scope>NUCLEOTIDE SEQUENCE [LARGE SCALE GENOMIC DNA]</scope>
    <source>
        <strain>NCTC 10229</strain>
    </source>
</reference>
<evidence type="ECO:0000255" key="1">
    <source>
        <dbReference type="HAMAP-Rule" id="MF_00368"/>
    </source>
</evidence>
<evidence type="ECO:0000305" key="2"/>
<comment type="function">
    <text evidence="1">Forms part of the ribosomal stalk which helps the ribosome interact with GTP-bound translation factors. Is thus essential for accurate translation.</text>
</comment>
<comment type="subunit">
    <text evidence="1">Homodimer. Part of the ribosomal stalk of the 50S ribosomal subunit. Forms a multimeric L10(L12)X complex, where L10 forms an elongated spine to which 2 to 4 L12 dimers bind in a sequential fashion. Binds GTP-bound translation factors.</text>
</comment>
<comment type="similarity">
    <text evidence="1">Belongs to the bacterial ribosomal protein bL12 family.</text>
</comment>
<gene>
    <name evidence="1" type="primary">rplL</name>
    <name type="ordered locus">BMA10229_A1913</name>
</gene>
<protein>
    <recommendedName>
        <fullName evidence="1">Large ribosomal subunit protein bL12</fullName>
    </recommendedName>
    <alternativeName>
        <fullName evidence="2">50S ribosomal protein L7/L12</fullName>
    </alternativeName>
</protein>
<sequence>MAIAKEDILAAVEGMTVLELNELVKAFEEKFGVSAAAVAVAGPAAGGAAAAAEEKTEFTVVLAEAGSNKVAVIKAVREITGLGLKEAKDLVDGAPKPVKEGVDKASADEAKKKLEDAGAKVELK</sequence>
<name>RL7_BURM9</name>
<feature type="chain" id="PRO_1000006972" description="Large ribosomal subunit protein bL12">
    <location>
        <begin position="1"/>
        <end position="124"/>
    </location>
</feature>
<accession>A2S7G5</accession>
<proteinExistence type="inferred from homology"/>
<keyword id="KW-0687">Ribonucleoprotein</keyword>
<keyword id="KW-0689">Ribosomal protein</keyword>